<dbReference type="EC" id="6.3.4.18" evidence="1"/>
<dbReference type="EMBL" id="CP000029">
    <property type="protein sequence ID" value="AAW53996.1"/>
    <property type="molecule type" value="Genomic_DNA"/>
</dbReference>
<dbReference type="RefSeq" id="WP_002486052.1">
    <property type="nucleotide sequence ID" value="NC_002976.3"/>
</dbReference>
<dbReference type="SMR" id="Q5HQA5"/>
<dbReference type="STRING" id="176279.SERP0650"/>
<dbReference type="GeneID" id="50019097"/>
<dbReference type="KEGG" id="ser:SERP0650"/>
<dbReference type="eggNOG" id="COG0026">
    <property type="taxonomic scope" value="Bacteria"/>
</dbReference>
<dbReference type="HOGENOM" id="CLU_011534_0_1_9"/>
<dbReference type="UniPathway" id="UPA00074">
    <property type="reaction ID" value="UER00942"/>
</dbReference>
<dbReference type="Proteomes" id="UP000000531">
    <property type="component" value="Chromosome"/>
</dbReference>
<dbReference type="GO" id="GO:0005829">
    <property type="term" value="C:cytosol"/>
    <property type="evidence" value="ECO:0007669"/>
    <property type="project" value="TreeGrafter"/>
</dbReference>
<dbReference type="GO" id="GO:0034028">
    <property type="term" value="F:5-(carboxyamino)imidazole ribonucleotide synthase activity"/>
    <property type="evidence" value="ECO:0007669"/>
    <property type="project" value="UniProtKB-UniRule"/>
</dbReference>
<dbReference type="GO" id="GO:0005524">
    <property type="term" value="F:ATP binding"/>
    <property type="evidence" value="ECO:0007669"/>
    <property type="project" value="UniProtKB-KW"/>
</dbReference>
<dbReference type="GO" id="GO:0046872">
    <property type="term" value="F:metal ion binding"/>
    <property type="evidence" value="ECO:0007669"/>
    <property type="project" value="InterPro"/>
</dbReference>
<dbReference type="GO" id="GO:0004638">
    <property type="term" value="F:phosphoribosylaminoimidazole carboxylase activity"/>
    <property type="evidence" value="ECO:0007669"/>
    <property type="project" value="InterPro"/>
</dbReference>
<dbReference type="GO" id="GO:0006189">
    <property type="term" value="P:'de novo' IMP biosynthetic process"/>
    <property type="evidence" value="ECO:0007669"/>
    <property type="project" value="UniProtKB-UniRule"/>
</dbReference>
<dbReference type="FunFam" id="3.30.1490.20:FF:000015">
    <property type="entry name" value="N5-carboxyaminoimidazole ribonucleotide synthase"/>
    <property type="match status" value="1"/>
</dbReference>
<dbReference type="FunFam" id="3.40.50.20:FF:000016">
    <property type="entry name" value="N5-carboxyaminoimidazole ribonucleotide synthase"/>
    <property type="match status" value="1"/>
</dbReference>
<dbReference type="Gene3D" id="3.40.50.20">
    <property type="match status" value="1"/>
</dbReference>
<dbReference type="Gene3D" id="3.30.1490.20">
    <property type="entry name" value="ATP-grasp fold, A domain"/>
    <property type="match status" value="1"/>
</dbReference>
<dbReference type="Gene3D" id="3.30.470.20">
    <property type="entry name" value="ATP-grasp fold, B domain"/>
    <property type="match status" value="1"/>
</dbReference>
<dbReference type="HAMAP" id="MF_01928">
    <property type="entry name" value="PurK"/>
    <property type="match status" value="1"/>
</dbReference>
<dbReference type="InterPro" id="IPR011761">
    <property type="entry name" value="ATP-grasp"/>
</dbReference>
<dbReference type="InterPro" id="IPR003135">
    <property type="entry name" value="ATP-grasp_carboxylate-amine"/>
</dbReference>
<dbReference type="InterPro" id="IPR013815">
    <property type="entry name" value="ATP_grasp_subdomain_1"/>
</dbReference>
<dbReference type="InterPro" id="IPR016185">
    <property type="entry name" value="PreATP-grasp_dom_sf"/>
</dbReference>
<dbReference type="InterPro" id="IPR005875">
    <property type="entry name" value="PurK"/>
</dbReference>
<dbReference type="InterPro" id="IPR040686">
    <property type="entry name" value="PurK_C"/>
</dbReference>
<dbReference type="InterPro" id="IPR054350">
    <property type="entry name" value="PurT/PurK_preATP-grasp"/>
</dbReference>
<dbReference type="InterPro" id="IPR011054">
    <property type="entry name" value="Rudment_hybrid_motif"/>
</dbReference>
<dbReference type="NCBIfam" id="NF004675">
    <property type="entry name" value="PRK06019.1-1"/>
    <property type="match status" value="1"/>
</dbReference>
<dbReference type="NCBIfam" id="NF004679">
    <property type="entry name" value="PRK06019.1-5"/>
    <property type="match status" value="1"/>
</dbReference>
<dbReference type="NCBIfam" id="TIGR01161">
    <property type="entry name" value="purK"/>
    <property type="match status" value="1"/>
</dbReference>
<dbReference type="PANTHER" id="PTHR11609:SF5">
    <property type="entry name" value="PHOSPHORIBOSYLAMINOIMIDAZOLE CARBOXYLASE"/>
    <property type="match status" value="1"/>
</dbReference>
<dbReference type="PANTHER" id="PTHR11609">
    <property type="entry name" value="PURINE BIOSYNTHESIS PROTEIN 6/7, PUR6/7"/>
    <property type="match status" value="1"/>
</dbReference>
<dbReference type="Pfam" id="PF02222">
    <property type="entry name" value="ATP-grasp"/>
    <property type="match status" value="1"/>
</dbReference>
<dbReference type="Pfam" id="PF17769">
    <property type="entry name" value="PurK_C"/>
    <property type="match status" value="1"/>
</dbReference>
<dbReference type="Pfam" id="PF22660">
    <property type="entry name" value="RS_preATP-grasp-like"/>
    <property type="match status" value="1"/>
</dbReference>
<dbReference type="SUPFAM" id="SSF56059">
    <property type="entry name" value="Glutathione synthetase ATP-binding domain-like"/>
    <property type="match status" value="1"/>
</dbReference>
<dbReference type="SUPFAM" id="SSF52440">
    <property type="entry name" value="PreATP-grasp domain"/>
    <property type="match status" value="1"/>
</dbReference>
<dbReference type="SUPFAM" id="SSF51246">
    <property type="entry name" value="Rudiment single hybrid motif"/>
    <property type="match status" value="1"/>
</dbReference>
<dbReference type="PROSITE" id="PS50975">
    <property type="entry name" value="ATP_GRASP"/>
    <property type="match status" value="1"/>
</dbReference>
<gene>
    <name evidence="1" type="primary">purK</name>
    <name type="ordered locus">SERP0650</name>
</gene>
<organism>
    <name type="scientific">Staphylococcus epidermidis (strain ATCC 35984 / DSM 28319 / BCRC 17069 / CCUG 31568 / BM 3577 / RP62A)</name>
    <dbReference type="NCBI Taxonomy" id="176279"/>
    <lineage>
        <taxon>Bacteria</taxon>
        <taxon>Bacillati</taxon>
        <taxon>Bacillota</taxon>
        <taxon>Bacilli</taxon>
        <taxon>Bacillales</taxon>
        <taxon>Staphylococcaceae</taxon>
        <taxon>Staphylococcus</taxon>
    </lineage>
</organism>
<keyword id="KW-0067">ATP-binding</keyword>
<keyword id="KW-0436">Ligase</keyword>
<keyword id="KW-0547">Nucleotide-binding</keyword>
<keyword id="KW-0658">Purine biosynthesis</keyword>
<keyword id="KW-1185">Reference proteome</keyword>
<sequence length="375" mass="43226">MNFSKLKFGATIGIIGGGQLGKMMAQSAQKMGYKVIVLDPNEDCPCRYVAHQFIHANYDDEQALNQLGENSDVVTYEFENISSEQLKKLTKLYHIPQGYQAIELLQDRLTEKQTLLEANTQIVPFVQIQTNQDLLKAIEKLGFPFIVKTRFGGYDGKGQILVRNDSELDEAYQLVEKQECVAEQYLDIQKEVSLTVTIGNEQQTTYFPLQENEHQNQILFKTVVPARSDKENEARKEVEKITRAIHFVGTFTVEFFIDKENNLYVNEIAPRPHNSGHYSIEACDYSQFDTHILAITGQKLPQAIELLKPTVMMNLLGRDLDLLENEFSRHPDWHIHIYGKKERKPDRKMGHMTLLTDDVNQTEQYMLMKFEGRDK</sequence>
<proteinExistence type="inferred from homology"/>
<reference key="1">
    <citation type="journal article" date="2005" name="J. Bacteriol.">
        <title>Insights on evolution of virulence and resistance from the complete genome analysis of an early methicillin-resistant Staphylococcus aureus strain and a biofilm-producing methicillin-resistant Staphylococcus epidermidis strain.</title>
        <authorList>
            <person name="Gill S.R."/>
            <person name="Fouts D.E."/>
            <person name="Archer G.L."/>
            <person name="Mongodin E.F."/>
            <person name="DeBoy R.T."/>
            <person name="Ravel J."/>
            <person name="Paulsen I.T."/>
            <person name="Kolonay J.F."/>
            <person name="Brinkac L.M."/>
            <person name="Beanan M.J."/>
            <person name="Dodson R.J."/>
            <person name="Daugherty S.C."/>
            <person name="Madupu R."/>
            <person name="Angiuoli S.V."/>
            <person name="Durkin A.S."/>
            <person name="Haft D.H."/>
            <person name="Vamathevan J.J."/>
            <person name="Khouri H."/>
            <person name="Utterback T.R."/>
            <person name="Lee C."/>
            <person name="Dimitrov G."/>
            <person name="Jiang L."/>
            <person name="Qin H."/>
            <person name="Weidman J."/>
            <person name="Tran K."/>
            <person name="Kang K.H."/>
            <person name="Hance I.R."/>
            <person name="Nelson K.E."/>
            <person name="Fraser C.M."/>
        </authorList>
    </citation>
    <scope>NUCLEOTIDE SEQUENCE [LARGE SCALE GENOMIC DNA]</scope>
    <source>
        <strain>ATCC 35984 / DSM 28319 / BCRC 17069 / CCUG 31568 / BM 3577 / RP62A</strain>
    </source>
</reference>
<protein>
    <recommendedName>
        <fullName evidence="1">N5-carboxyaminoimidazole ribonucleotide synthase</fullName>
        <shortName evidence="1">N5-CAIR synthase</shortName>
        <ecNumber evidence="1">6.3.4.18</ecNumber>
    </recommendedName>
    <alternativeName>
        <fullName evidence="1">5-(carboxyamino)imidazole ribonucleotide synthetase</fullName>
    </alternativeName>
</protein>
<name>PURK_STAEQ</name>
<comment type="function">
    <text evidence="1">Catalyzes the ATP-dependent conversion of 5-aminoimidazole ribonucleotide (AIR) and HCO(3)(-) to N5-carboxyaminoimidazole ribonucleotide (N5-CAIR).</text>
</comment>
<comment type="catalytic activity">
    <reaction evidence="1">
        <text>5-amino-1-(5-phospho-beta-D-ribosyl)imidazole + hydrogencarbonate + ATP = 5-carboxyamino-1-(5-phospho-D-ribosyl)imidazole + ADP + phosphate + 2 H(+)</text>
        <dbReference type="Rhea" id="RHEA:19317"/>
        <dbReference type="ChEBI" id="CHEBI:15378"/>
        <dbReference type="ChEBI" id="CHEBI:17544"/>
        <dbReference type="ChEBI" id="CHEBI:30616"/>
        <dbReference type="ChEBI" id="CHEBI:43474"/>
        <dbReference type="ChEBI" id="CHEBI:58730"/>
        <dbReference type="ChEBI" id="CHEBI:137981"/>
        <dbReference type="ChEBI" id="CHEBI:456216"/>
        <dbReference type="EC" id="6.3.4.18"/>
    </reaction>
</comment>
<comment type="pathway">
    <text evidence="1">Purine metabolism; IMP biosynthesis via de novo pathway; 5-amino-1-(5-phospho-D-ribosyl)imidazole-4-carboxylate from 5-amino-1-(5-phospho-D-ribosyl)imidazole (N5-CAIR route): step 1/2.</text>
</comment>
<comment type="subunit">
    <text evidence="1">Homodimer.</text>
</comment>
<comment type="similarity">
    <text evidence="1">Belongs to the PurK/PurT family.</text>
</comment>
<evidence type="ECO:0000255" key="1">
    <source>
        <dbReference type="HAMAP-Rule" id="MF_01928"/>
    </source>
</evidence>
<accession>Q5HQA5</accession>
<feature type="chain" id="PRO_0000075009" description="N5-carboxyaminoimidazole ribonucleotide synthase">
    <location>
        <begin position="1"/>
        <end position="375"/>
    </location>
</feature>
<feature type="domain" description="ATP-grasp" evidence="1">
    <location>
        <begin position="112"/>
        <end position="296"/>
    </location>
</feature>
<feature type="binding site" evidence="1">
    <location>
        <position position="108"/>
    </location>
    <ligand>
        <name>ATP</name>
        <dbReference type="ChEBI" id="CHEBI:30616"/>
    </ligand>
</feature>
<feature type="binding site" evidence="1">
    <location>
        <position position="148"/>
    </location>
    <ligand>
        <name>ATP</name>
        <dbReference type="ChEBI" id="CHEBI:30616"/>
    </ligand>
</feature>
<feature type="binding site" evidence="1">
    <location>
        <begin position="153"/>
        <end position="159"/>
    </location>
    <ligand>
        <name>ATP</name>
        <dbReference type="ChEBI" id="CHEBI:30616"/>
    </ligand>
</feature>
<feature type="binding site" evidence="1">
    <location>
        <begin position="183"/>
        <end position="186"/>
    </location>
    <ligand>
        <name>ATP</name>
        <dbReference type="ChEBI" id="CHEBI:30616"/>
    </ligand>
</feature>
<feature type="binding site" evidence="1">
    <location>
        <position position="191"/>
    </location>
    <ligand>
        <name>ATP</name>
        <dbReference type="ChEBI" id="CHEBI:30616"/>
    </ligand>
</feature>
<feature type="binding site" evidence="1">
    <location>
        <position position="214"/>
    </location>
    <ligand>
        <name>ATP</name>
        <dbReference type="ChEBI" id="CHEBI:30616"/>
    </ligand>
</feature>
<feature type="binding site" evidence="1">
    <location>
        <begin position="266"/>
        <end position="267"/>
    </location>
    <ligand>
        <name>ATP</name>
        <dbReference type="ChEBI" id="CHEBI:30616"/>
    </ligand>
</feature>